<name>WDR24_DANRE</name>
<feature type="chain" id="PRO_0000051378" description="GATOR2 complex protein WDR24">
    <location>
        <begin position="1"/>
        <end position="779"/>
    </location>
</feature>
<feature type="repeat" description="WD 1">
    <location>
        <begin position="66"/>
        <end position="106"/>
    </location>
</feature>
<feature type="repeat" description="WD 2">
    <location>
        <begin position="112"/>
        <end position="152"/>
    </location>
</feature>
<feature type="repeat" description="WD 3">
    <location>
        <begin position="155"/>
        <end position="195"/>
    </location>
</feature>
<feature type="repeat" description="WD 4">
    <location>
        <begin position="199"/>
        <end position="239"/>
    </location>
</feature>
<feature type="repeat" description="WD 5">
    <location>
        <begin position="243"/>
        <end position="285"/>
    </location>
</feature>
<feature type="repeat" description="WD 6">
    <location>
        <begin position="289"/>
        <end position="332"/>
    </location>
</feature>
<feature type="zinc finger region" description="C4-type" evidence="1">
    <location>
        <begin position="707"/>
        <end position="729"/>
    </location>
</feature>
<feature type="zinc finger region" description="RING-type; atypical" evidence="1">
    <location>
        <begin position="730"/>
        <end position="779"/>
    </location>
</feature>
<feature type="region of interest" description="Disordered" evidence="2">
    <location>
        <begin position="506"/>
        <end position="526"/>
    </location>
</feature>
<feature type="region of interest" description="Disordered" evidence="2">
    <location>
        <begin position="570"/>
        <end position="590"/>
    </location>
</feature>
<feature type="binding site" evidence="1">
    <location>
        <position position="708"/>
    </location>
    <ligand>
        <name>Zn(2+)</name>
        <dbReference type="ChEBI" id="CHEBI:29105"/>
        <label>1</label>
    </ligand>
</feature>
<feature type="binding site" evidence="1">
    <location>
        <position position="711"/>
    </location>
    <ligand>
        <name>Zn(2+)</name>
        <dbReference type="ChEBI" id="CHEBI:29105"/>
        <label>1</label>
    </ligand>
</feature>
<feature type="binding site" evidence="1">
    <location>
        <position position="722"/>
    </location>
    <ligand>
        <name>Zn(2+)</name>
        <dbReference type="ChEBI" id="CHEBI:29105"/>
        <label>1</label>
    </ligand>
</feature>
<feature type="binding site" evidence="1">
    <location>
        <position position="725"/>
    </location>
    <ligand>
        <name>Zn(2+)</name>
        <dbReference type="ChEBI" id="CHEBI:29105"/>
        <label>1</label>
    </ligand>
</feature>
<feature type="binding site" evidence="1">
    <location>
        <position position="732"/>
    </location>
    <ligand>
        <name>Zn(2+)</name>
        <dbReference type="ChEBI" id="CHEBI:29105"/>
        <label>2</label>
    </ligand>
</feature>
<feature type="binding site" evidence="1">
    <location>
        <position position="735"/>
    </location>
    <ligand>
        <name>Zn(2+)</name>
        <dbReference type="ChEBI" id="CHEBI:29105"/>
        <label>2</label>
    </ligand>
</feature>
<feature type="binding site" evidence="1">
    <location>
        <position position="746"/>
    </location>
    <ligand>
        <name>Zn(2+)</name>
        <dbReference type="ChEBI" id="CHEBI:29105"/>
        <label>3</label>
    </ligand>
</feature>
<feature type="binding site" evidence="1">
    <location>
        <position position="749"/>
    </location>
    <ligand>
        <name>Zn(2+)</name>
        <dbReference type="ChEBI" id="CHEBI:29105"/>
        <label>3</label>
    </ligand>
</feature>
<feature type="binding site" evidence="1">
    <location>
        <position position="751"/>
    </location>
    <ligand>
        <name>Zn(2+)</name>
        <dbReference type="ChEBI" id="CHEBI:29105"/>
        <label>4</label>
    </ligand>
</feature>
<feature type="binding site" evidence="1">
    <location>
        <position position="754"/>
    </location>
    <ligand>
        <name>Zn(2+)</name>
        <dbReference type="ChEBI" id="CHEBI:29105"/>
        <label>2</label>
    </ligand>
</feature>
<feature type="binding site" evidence="1">
    <location>
        <position position="757"/>
    </location>
    <ligand>
        <name>Zn(2+)</name>
        <dbReference type="ChEBI" id="CHEBI:29105"/>
        <label>2</label>
    </ligand>
</feature>
<feature type="binding site" evidence="1">
    <location>
        <position position="768"/>
    </location>
    <ligand>
        <name>Zn(2+)</name>
        <dbReference type="ChEBI" id="CHEBI:29105"/>
        <label>4</label>
    </ligand>
</feature>
<feature type="binding site" evidence="1">
    <location>
        <position position="772"/>
    </location>
    <ligand>
        <name>Zn(2+)</name>
        <dbReference type="ChEBI" id="CHEBI:29105"/>
        <label>4</label>
    </ligand>
</feature>
<feature type="binding site" evidence="1">
    <location>
        <position position="774"/>
    </location>
    <ligand>
        <name>Zn(2+)</name>
        <dbReference type="ChEBI" id="CHEBI:29105"/>
        <label>3</label>
    </ligand>
</feature>
<feature type="binding site" evidence="1">
    <location>
        <position position="776"/>
    </location>
    <ligand>
        <name>Zn(2+)</name>
        <dbReference type="ChEBI" id="CHEBI:29105"/>
        <label>3</label>
    </ligand>
</feature>
<comment type="function">
    <text evidence="1">Catalytic component of the GATOR2 complex, a multiprotein complex that acts as an activator of the amino acid-sensing branch of the mTORC1 signaling pathway. The GATOR2 complex indirectly activates mTORC1 through the inhibition of the GATOR1 subcomplex. GATOR2 probably acts as an E3 ubiquitin-protein ligase toward GATOR1. In the presence of abundant amino acids, the GATOR2 complex mediates ubiquitination of the NPRL2 core component of the GATOR1 complex, leading to GATOR1 inactivation. In the absence of amino acids, GATOR2 is inhibited, activating the GATOR1 complex. In addition to its role in regulation of the mTORC1 complex, promotes the acidification of lysosomes and facilitates autophagic flux. Within the GATOR2 complex, WDR24 constitutes the catalytic subunit that mediates 'Lys-6'-linked ubiquitination of NPRL2.</text>
</comment>
<comment type="catalytic activity">
    <reaction evidence="1">
        <text>S-ubiquitinyl-[E2 ubiquitin-conjugating enzyme]-L-cysteine + [acceptor protein]-L-lysine = [E2 ubiquitin-conjugating enzyme]-L-cysteine + N(6)-ubiquitinyl-[acceptor protein]-L-lysine.</text>
        <dbReference type="EC" id="2.3.2.27"/>
    </reaction>
</comment>
<comment type="activity regulation">
    <text evidence="1">The GATOR2 complex is negatively regulated by the upstream amino acid sensors CASTOR1 and SESN2, which sequester the GATOR2 complex in absence of amino acids. In the presence of abundant amino acids, GATOR2 is released from CASTOR1 and SESN2 and activated.</text>
</comment>
<comment type="pathway">
    <text evidence="1">Protein modification; protein ubiquitination.</text>
</comment>
<comment type="subunit">
    <text evidence="1">Component of the GATOR2 subcomplex, composed of MIOS, SEC13, SEH1L, WDR24 and WDR59. The GATOR2 complex interacts with CASTOR1 and CASTOR2; the interaction is negatively regulated by arginine. The GATOR2 complex interacts with SESN1, SESN2 and SESN3; the interaction is negatively regulated by amino acids.</text>
</comment>
<comment type="subcellular location">
    <subcellularLocation>
        <location evidence="1">Lysosome membrane</location>
    </subcellularLocation>
</comment>
<comment type="similarity">
    <text evidence="3">Belongs to the WD repeat WDR24 family.</text>
</comment>
<accession>Q7ZVL2</accession>
<proteinExistence type="evidence at transcript level"/>
<gene>
    <name evidence="1" type="primary">wdr24</name>
</gene>
<reference key="1">
    <citation type="submission" date="2003-01" db="EMBL/GenBank/DDBJ databases">
        <authorList>
            <consortium name="NIH - Zebrafish Gene Collection (ZGC) project"/>
        </authorList>
    </citation>
    <scope>NUCLEOTIDE SEQUENCE [LARGE SCALE MRNA]</scope>
    <source>
        <strain>AB</strain>
        <tissue>Embryo</tissue>
    </source>
</reference>
<organism>
    <name type="scientific">Danio rerio</name>
    <name type="common">Zebrafish</name>
    <name type="synonym">Brachydanio rerio</name>
    <dbReference type="NCBI Taxonomy" id="7955"/>
    <lineage>
        <taxon>Eukaryota</taxon>
        <taxon>Metazoa</taxon>
        <taxon>Chordata</taxon>
        <taxon>Craniata</taxon>
        <taxon>Vertebrata</taxon>
        <taxon>Euteleostomi</taxon>
        <taxon>Actinopterygii</taxon>
        <taxon>Neopterygii</taxon>
        <taxon>Teleostei</taxon>
        <taxon>Ostariophysi</taxon>
        <taxon>Cypriniformes</taxon>
        <taxon>Danionidae</taxon>
        <taxon>Danioninae</taxon>
        <taxon>Danio</taxon>
    </lineage>
</organism>
<keyword id="KW-0072">Autophagy</keyword>
<keyword id="KW-0458">Lysosome</keyword>
<keyword id="KW-0472">Membrane</keyword>
<keyword id="KW-0479">Metal-binding</keyword>
<keyword id="KW-1185">Reference proteome</keyword>
<keyword id="KW-0677">Repeat</keyword>
<keyword id="KW-0808">Transferase</keyword>
<keyword id="KW-0833">Ubl conjugation pathway</keyword>
<keyword id="KW-0853">WD repeat</keyword>
<keyword id="KW-0862">Zinc</keyword>
<keyword id="KW-0863">Zinc-finger</keyword>
<protein>
    <recommendedName>
        <fullName evidence="3">GATOR2 complex protein WDR24</fullName>
        <ecNumber evidence="1">2.3.2.27</ecNumber>
    </recommendedName>
</protein>
<sequence>MEKMTRVSTINGRTMFCHLDAPANAISVCRDATQVVVAGRNIFKIYGLEEDGFVERLNLRVGRKPSLNFSCADVMWHQMEENLLATAATNGAVVTWNLSRPCRNKQEQLFTEHKRTVNKVCFHPTEVNMLLSGSQDGFMKCFDLRKKESVSTFSGQSESVRDVQFSMKDYFTFAASFENGNVQLWDIRRPDRYERMFTAHTGPVFCCDWHPEDRGWLATGGRDKMVKVWDMSTNRVKEIYCVQTFASVARVKWRPERRYHLATCSMMVDHNIYVWDVRRPFIPFATFEEHKDVTTGIVWRHQHDPYFLLSGSKDSTLYQHMFKDASRPVDRANPEGLCFGLFGDLAFAAKESLMSAPASAGDVGRKTYPGGDRRYPIFFFKKPDVTEQFAQVSSALSVFESEADSSAGMDWFINTAQSYLLSGKPFAELCEHNAHVAKSLNRPQESTTWTMLRIMFSEPANPSLSTNHNLNKSGNLPLVNSFSMKEMSGALNERNKENRQDNIHSLETNLNNNDENEETEGSEGQAEYLFVDDELDDDELYSMEHDNQPAEESEYLLPQEAFPLRHEIMDHPSAPEPLQEKQESPHVSGSEAESMCLTPMESFSLISVSQQLFSPHLPPKFFCPIVKEMLCYYAEQGDVQMAVSVLIVLGDRIRKEIDELMQEHWYMSYIDLLQRFELWNVSNEVIKLSTCGAIMCLNQASTTLHINCSNCKRPMSNKGWICDRCHQCASVCAVCHHVVKGLFVWCQGCSHGGHLEHVMEWLKQSKHCPAGCGHLCEYT</sequence>
<evidence type="ECO:0000250" key="1">
    <source>
        <dbReference type="UniProtKB" id="Q96S15"/>
    </source>
</evidence>
<evidence type="ECO:0000256" key="2">
    <source>
        <dbReference type="SAM" id="MobiDB-lite"/>
    </source>
</evidence>
<evidence type="ECO:0000305" key="3"/>
<dbReference type="EC" id="2.3.2.27" evidence="1"/>
<dbReference type="EMBL" id="BC045501">
    <property type="protein sequence ID" value="AAH45501.1"/>
    <property type="molecule type" value="mRNA"/>
</dbReference>
<dbReference type="RefSeq" id="NP_998228.1">
    <property type="nucleotide sequence ID" value="NM_213063.1"/>
</dbReference>
<dbReference type="SMR" id="Q7ZVL2"/>
<dbReference type="FunCoup" id="Q7ZVL2">
    <property type="interactions" value="1136"/>
</dbReference>
<dbReference type="STRING" id="7955.ENSDARP00000008451"/>
<dbReference type="PaxDb" id="7955-ENSDARP00000008451"/>
<dbReference type="GeneID" id="406336"/>
<dbReference type="KEGG" id="dre:406336"/>
<dbReference type="AGR" id="ZFIN:ZDB-GENE-040426-2012"/>
<dbReference type="CTD" id="84219"/>
<dbReference type="ZFIN" id="ZDB-GENE-040426-2012">
    <property type="gene designation" value="wdr24"/>
</dbReference>
<dbReference type="eggNOG" id="KOG0269">
    <property type="taxonomic scope" value="Eukaryota"/>
</dbReference>
<dbReference type="InParanoid" id="Q7ZVL2"/>
<dbReference type="OrthoDB" id="60955at2759"/>
<dbReference type="PhylomeDB" id="Q7ZVL2"/>
<dbReference type="UniPathway" id="UPA00143"/>
<dbReference type="PRO" id="PR:Q7ZVL2"/>
<dbReference type="Proteomes" id="UP000000437">
    <property type="component" value="Chromosome 24"/>
</dbReference>
<dbReference type="GO" id="GO:0005829">
    <property type="term" value="C:cytosol"/>
    <property type="evidence" value="ECO:0000318"/>
    <property type="project" value="GO_Central"/>
</dbReference>
<dbReference type="GO" id="GO:0061700">
    <property type="term" value="C:GATOR2 complex"/>
    <property type="evidence" value="ECO:0000250"/>
    <property type="project" value="UniProtKB"/>
</dbReference>
<dbReference type="GO" id="GO:0005765">
    <property type="term" value="C:lysosomal membrane"/>
    <property type="evidence" value="ECO:0000250"/>
    <property type="project" value="UniProtKB"/>
</dbReference>
<dbReference type="GO" id="GO:0005774">
    <property type="term" value="C:vacuolar membrane"/>
    <property type="evidence" value="ECO:0000318"/>
    <property type="project" value="GO_Central"/>
</dbReference>
<dbReference type="GO" id="GO:0061630">
    <property type="term" value="F:ubiquitin protein ligase activity"/>
    <property type="evidence" value="ECO:0000250"/>
    <property type="project" value="UniProtKB"/>
</dbReference>
<dbReference type="GO" id="GO:0008270">
    <property type="term" value="F:zinc ion binding"/>
    <property type="evidence" value="ECO:0007669"/>
    <property type="project" value="UniProtKB-KW"/>
</dbReference>
<dbReference type="GO" id="GO:0006914">
    <property type="term" value="P:autophagy"/>
    <property type="evidence" value="ECO:0007669"/>
    <property type="project" value="UniProtKB-KW"/>
</dbReference>
<dbReference type="GO" id="GO:0034198">
    <property type="term" value="P:cellular response to amino acid starvation"/>
    <property type="evidence" value="ECO:0000318"/>
    <property type="project" value="GO_Central"/>
</dbReference>
<dbReference type="GO" id="GO:0031669">
    <property type="term" value="P:cellular response to nutrient levels"/>
    <property type="evidence" value="ECO:0000250"/>
    <property type="project" value="UniProtKB"/>
</dbReference>
<dbReference type="GO" id="GO:0016239">
    <property type="term" value="P:positive regulation of macroautophagy"/>
    <property type="evidence" value="ECO:0000318"/>
    <property type="project" value="GO_Central"/>
</dbReference>
<dbReference type="GO" id="GO:1904263">
    <property type="term" value="P:positive regulation of TORC1 signaling"/>
    <property type="evidence" value="ECO:0000250"/>
    <property type="project" value="UniProtKB"/>
</dbReference>
<dbReference type="GO" id="GO:0085020">
    <property type="term" value="P:protein K6-linked ubiquitination"/>
    <property type="evidence" value="ECO:0000250"/>
    <property type="project" value="UniProtKB"/>
</dbReference>
<dbReference type="CDD" id="cd16693">
    <property type="entry name" value="mRING-H2-C3H3C2_WDR24"/>
    <property type="match status" value="1"/>
</dbReference>
<dbReference type="FunFam" id="2.130.10.10:FF:000106">
    <property type="entry name" value="WD repeat domain 24"/>
    <property type="match status" value="1"/>
</dbReference>
<dbReference type="Gene3D" id="2.130.10.10">
    <property type="entry name" value="YVTN repeat-like/Quinoprotein amine dehydrogenase"/>
    <property type="match status" value="1"/>
</dbReference>
<dbReference type="InterPro" id="IPR015943">
    <property type="entry name" value="WD40/YVTN_repeat-like_dom_sf"/>
</dbReference>
<dbReference type="InterPro" id="IPR019775">
    <property type="entry name" value="WD40_repeat_CS"/>
</dbReference>
<dbReference type="InterPro" id="IPR036322">
    <property type="entry name" value="WD40_repeat_dom_sf"/>
</dbReference>
<dbReference type="InterPro" id="IPR001680">
    <property type="entry name" value="WD40_rpt"/>
</dbReference>
<dbReference type="InterPro" id="IPR037590">
    <property type="entry name" value="WDR24"/>
</dbReference>
<dbReference type="PANTHER" id="PTHR46200">
    <property type="entry name" value="GATOR COMPLEX PROTEIN WDR24"/>
    <property type="match status" value="1"/>
</dbReference>
<dbReference type="PANTHER" id="PTHR46200:SF1">
    <property type="entry name" value="GATOR COMPLEX PROTEIN WDR24"/>
    <property type="match status" value="1"/>
</dbReference>
<dbReference type="Pfam" id="PF00400">
    <property type="entry name" value="WD40"/>
    <property type="match status" value="3"/>
</dbReference>
<dbReference type="SMART" id="SM00320">
    <property type="entry name" value="WD40"/>
    <property type="match status" value="6"/>
</dbReference>
<dbReference type="SUPFAM" id="SSF50978">
    <property type="entry name" value="WD40 repeat-like"/>
    <property type="match status" value="1"/>
</dbReference>
<dbReference type="PROSITE" id="PS00678">
    <property type="entry name" value="WD_REPEATS_1"/>
    <property type="match status" value="3"/>
</dbReference>
<dbReference type="PROSITE" id="PS50082">
    <property type="entry name" value="WD_REPEATS_2"/>
    <property type="match status" value="2"/>
</dbReference>
<dbReference type="PROSITE" id="PS50294">
    <property type="entry name" value="WD_REPEATS_REGION"/>
    <property type="match status" value="1"/>
</dbReference>